<reference key="1">
    <citation type="journal article" date="2004" name="Nat. Genet.">
        <title>Complete sequencing and characterization of 21,243 full-length human cDNAs.</title>
        <authorList>
            <person name="Ota T."/>
            <person name="Suzuki Y."/>
            <person name="Nishikawa T."/>
            <person name="Otsuki T."/>
            <person name="Sugiyama T."/>
            <person name="Irie R."/>
            <person name="Wakamatsu A."/>
            <person name="Hayashi K."/>
            <person name="Sato H."/>
            <person name="Nagai K."/>
            <person name="Kimura K."/>
            <person name="Makita H."/>
            <person name="Sekine M."/>
            <person name="Obayashi M."/>
            <person name="Nishi T."/>
            <person name="Shibahara T."/>
            <person name="Tanaka T."/>
            <person name="Ishii S."/>
            <person name="Yamamoto J."/>
            <person name="Saito K."/>
            <person name="Kawai Y."/>
            <person name="Isono Y."/>
            <person name="Nakamura Y."/>
            <person name="Nagahari K."/>
            <person name="Murakami K."/>
            <person name="Yasuda T."/>
            <person name="Iwayanagi T."/>
            <person name="Wagatsuma M."/>
            <person name="Shiratori A."/>
            <person name="Sudo H."/>
            <person name="Hosoiri T."/>
            <person name="Kaku Y."/>
            <person name="Kodaira H."/>
            <person name="Kondo H."/>
            <person name="Sugawara M."/>
            <person name="Takahashi M."/>
            <person name="Kanda K."/>
            <person name="Yokoi T."/>
            <person name="Furuya T."/>
            <person name="Kikkawa E."/>
            <person name="Omura Y."/>
            <person name="Abe K."/>
            <person name="Kamihara K."/>
            <person name="Katsuta N."/>
            <person name="Sato K."/>
            <person name="Tanikawa M."/>
            <person name="Yamazaki M."/>
            <person name="Ninomiya K."/>
            <person name="Ishibashi T."/>
            <person name="Yamashita H."/>
            <person name="Murakawa K."/>
            <person name="Fujimori K."/>
            <person name="Tanai H."/>
            <person name="Kimata M."/>
            <person name="Watanabe M."/>
            <person name="Hiraoka S."/>
            <person name="Chiba Y."/>
            <person name="Ishida S."/>
            <person name="Ono Y."/>
            <person name="Takiguchi S."/>
            <person name="Watanabe S."/>
            <person name="Yosida M."/>
            <person name="Hotuta T."/>
            <person name="Kusano J."/>
            <person name="Kanehori K."/>
            <person name="Takahashi-Fujii A."/>
            <person name="Hara H."/>
            <person name="Tanase T.-O."/>
            <person name="Nomura Y."/>
            <person name="Togiya S."/>
            <person name="Komai F."/>
            <person name="Hara R."/>
            <person name="Takeuchi K."/>
            <person name="Arita M."/>
            <person name="Imose N."/>
            <person name="Musashino K."/>
            <person name="Yuuki H."/>
            <person name="Oshima A."/>
            <person name="Sasaki N."/>
            <person name="Aotsuka S."/>
            <person name="Yoshikawa Y."/>
            <person name="Matsunawa H."/>
            <person name="Ichihara T."/>
            <person name="Shiohata N."/>
            <person name="Sano S."/>
            <person name="Moriya S."/>
            <person name="Momiyama H."/>
            <person name="Satoh N."/>
            <person name="Takami S."/>
            <person name="Terashima Y."/>
            <person name="Suzuki O."/>
            <person name="Nakagawa S."/>
            <person name="Senoh A."/>
            <person name="Mizoguchi H."/>
            <person name="Goto Y."/>
            <person name="Shimizu F."/>
            <person name="Wakebe H."/>
            <person name="Hishigaki H."/>
            <person name="Watanabe T."/>
            <person name="Sugiyama A."/>
            <person name="Takemoto M."/>
            <person name="Kawakami B."/>
            <person name="Yamazaki M."/>
            <person name="Watanabe K."/>
            <person name="Kumagai A."/>
            <person name="Itakura S."/>
            <person name="Fukuzumi Y."/>
            <person name="Fujimori Y."/>
            <person name="Komiyama M."/>
            <person name="Tashiro H."/>
            <person name="Tanigami A."/>
            <person name="Fujiwara T."/>
            <person name="Ono T."/>
            <person name="Yamada K."/>
            <person name="Fujii Y."/>
            <person name="Ozaki K."/>
            <person name="Hirao M."/>
            <person name="Ohmori Y."/>
            <person name="Kawabata A."/>
            <person name="Hikiji T."/>
            <person name="Kobatake N."/>
            <person name="Inagaki H."/>
            <person name="Ikema Y."/>
            <person name="Okamoto S."/>
            <person name="Okitani R."/>
            <person name="Kawakami T."/>
            <person name="Noguchi S."/>
            <person name="Itoh T."/>
            <person name="Shigeta K."/>
            <person name="Senba T."/>
            <person name="Matsumura K."/>
            <person name="Nakajima Y."/>
            <person name="Mizuno T."/>
            <person name="Morinaga M."/>
            <person name="Sasaki M."/>
            <person name="Togashi T."/>
            <person name="Oyama M."/>
            <person name="Hata H."/>
            <person name="Watanabe M."/>
            <person name="Komatsu T."/>
            <person name="Mizushima-Sugano J."/>
            <person name="Satoh T."/>
            <person name="Shirai Y."/>
            <person name="Takahashi Y."/>
            <person name="Nakagawa K."/>
            <person name="Okumura K."/>
            <person name="Nagase T."/>
            <person name="Nomura N."/>
            <person name="Kikuchi H."/>
            <person name="Masuho Y."/>
            <person name="Yamashita R."/>
            <person name="Nakai K."/>
            <person name="Yada T."/>
            <person name="Nakamura Y."/>
            <person name="Ohara O."/>
            <person name="Isogai T."/>
            <person name="Sugano S."/>
        </authorList>
    </citation>
    <scope>NUCLEOTIDE SEQUENCE [LARGE SCALE MRNA] (ISOFORMS 1; 2 AND 3)</scope>
    <source>
        <tissue>Caudate nucleus</tissue>
        <tissue>Placenta</tissue>
        <tissue>Retinoblastoma</tissue>
    </source>
</reference>
<reference key="2">
    <citation type="journal article" date="2007" name="BMC Genomics">
        <title>The full-ORF clone resource of the German cDNA consortium.</title>
        <authorList>
            <person name="Bechtel S."/>
            <person name="Rosenfelder H."/>
            <person name="Duda A."/>
            <person name="Schmidt C.P."/>
            <person name="Ernst U."/>
            <person name="Wellenreuther R."/>
            <person name="Mehrle A."/>
            <person name="Schuster C."/>
            <person name="Bahr A."/>
            <person name="Bloecker H."/>
            <person name="Heubner D."/>
            <person name="Hoerlein A."/>
            <person name="Michel G."/>
            <person name="Wedler H."/>
            <person name="Koehrer K."/>
            <person name="Ottenwaelder B."/>
            <person name="Poustka A."/>
            <person name="Wiemann S."/>
            <person name="Schupp I."/>
        </authorList>
    </citation>
    <scope>NUCLEOTIDE SEQUENCE [LARGE SCALE MRNA] (ISOFORM 3)</scope>
    <source>
        <tissue>Melanoma</tissue>
    </source>
</reference>
<reference key="3">
    <citation type="journal article" date="2004" name="Nature">
        <title>The DNA sequence and comparative analysis of human chromosome 10.</title>
        <authorList>
            <person name="Deloukas P."/>
            <person name="Earthrowl M.E."/>
            <person name="Grafham D.V."/>
            <person name="Rubenfield M."/>
            <person name="French L."/>
            <person name="Steward C.A."/>
            <person name="Sims S.K."/>
            <person name="Jones M.C."/>
            <person name="Searle S."/>
            <person name="Scott C."/>
            <person name="Howe K."/>
            <person name="Hunt S.E."/>
            <person name="Andrews T.D."/>
            <person name="Gilbert J.G.R."/>
            <person name="Swarbreck D."/>
            <person name="Ashurst J.L."/>
            <person name="Taylor A."/>
            <person name="Battles J."/>
            <person name="Bird C.P."/>
            <person name="Ainscough R."/>
            <person name="Almeida J.P."/>
            <person name="Ashwell R.I.S."/>
            <person name="Ambrose K.D."/>
            <person name="Babbage A.K."/>
            <person name="Bagguley C.L."/>
            <person name="Bailey J."/>
            <person name="Banerjee R."/>
            <person name="Bates K."/>
            <person name="Beasley H."/>
            <person name="Bray-Allen S."/>
            <person name="Brown A.J."/>
            <person name="Brown J.Y."/>
            <person name="Burford D.C."/>
            <person name="Burrill W."/>
            <person name="Burton J."/>
            <person name="Cahill P."/>
            <person name="Camire D."/>
            <person name="Carter N.P."/>
            <person name="Chapman J.C."/>
            <person name="Clark S.Y."/>
            <person name="Clarke G."/>
            <person name="Clee C.M."/>
            <person name="Clegg S."/>
            <person name="Corby N."/>
            <person name="Coulson A."/>
            <person name="Dhami P."/>
            <person name="Dutta I."/>
            <person name="Dunn M."/>
            <person name="Faulkner L."/>
            <person name="Frankish A."/>
            <person name="Frankland J.A."/>
            <person name="Garner P."/>
            <person name="Garnett J."/>
            <person name="Gribble S."/>
            <person name="Griffiths C."/>
            <person name="Grocock R."/>
            <person name="Gustafson E."/>
            <person name="Hammond S."/>
            <person name="Harley J.L."/>
            <person name="Hart E."/>
            <person name="Heath P.D."/>
            <person name="Ho T.P."/>
            <person name="Hopkins B."/>
            <person name="Horne J."/>
            <person name="Howden P.J."/>
            <person name="Huckle E."/>
            <person name="Hynds C."/>
            <person name="Johnson C."/>
            <person name="Johnson D."/>
            <person name="Kana A."/>
            <person name="Kay M."/>
            <person name="Kimberley A.M."/>
            <person name="Kershaw J.K."/>
            <person name="Kokkinaki M."/>
            <person name="Laird G.K."/>
            <person name="Lawlor S."/>
            <person name="Lee H.M."/>
            <person name="Leongamornlert D.A."/>
            <person name="Laird G."/>
            <person name="Lloyd C."/>
            <person name="Lloyd D.M."/>
            <person name="Loveland J."/>
            <person name="Lovell J."/>
            <person name="McLaren S."/>
            <person name="McLay K.E."/>
            <person name="McMurray A."/>
            <person name="Mashreghi-Mohammadi M."/>
            <person name="Matthews L."/>
            <person name="Milne S."/>
            <person name="Nickerson T."/>
            <person name="Nguyen M."/>
            <person name="Overton-Larty E."/>
            <person name="Palmer S.A."/>
            <person name="Pearce A.V."/>
            <person name="Peck A.I."/>
            <person name="Pelan S."/>
            <person name="Phillimore B."/>
            <person name="Porter K."/>
            <person name="Rice C.M."/>
            <person name="Rogosin A."/>
            <person name="Ross M.T."/>
            <person name="Sarafidou T."/>
            <person name="Sehra H.K."/>
            <person name="Shownkeen R."/>
            <person name="Skuce C.D."/>
            <person name="Smith M."/>
            <person name="Standring L."/>
            <person name="Sycamore N."/>
            <person name="Tester J."/>
            <person name="Thorpe A."/>
            <person name="Torcasso W."/>
            <person name="Tracey A."/>
            <person name="Tromans A."/>
            <person name="Tsolas J."/>
            <person name="Wall M."/>
            <person name="Walsh J."/>
            <person name="Wang H."/>
            <person name="Weinstock K."/>
            <person name="West A.P."/>
            <person name="Willey D.L."/>
            <person name="Whitehead S.L."/>
            <person name="Wilming L."/>
            <person name="Wray P.W."/>
            <person name="Young L."/>
            <person name="Chen Y."/>
            <person name="Lovering R.C."/>
            <person name="Moschonas N.K."/>
            <person name="Siebert R."/>
            <person name="Fechtel K."/>
            <person name="Bentley D."/>
            <person name="Durbin R.M."/>
            <person name="Hubbard T."/>
            <person name="Doucette-Stamm L."/>
            <person name="Beck S."/>
            <person name="Smith D.R."/>
            <person name="Rogers J."/>
        </authorList>
    </citation>
    <scope>NUCLEOTIDE SEQUENCE [LARGE SCALE GENOMIC DNA]</scope>
</reference>
<reference key="4">
    <citation type="submission" date="2005-09" db="EMBL/GenBank/DDBJ databases">
        <authorList>
            <person name="Mural R.J."/>
            <person name="Istrail S."/>
            <person name="Sutton G.G."/>
            <person name="Florea L."/>
            <person name="Halpern A.L."/>
            <person name="Mobarry C.M."/>
            <person name="Lippert R."/>
            <person name="Walenz B."/>
            <person name="Shatkay H."/>
            <person name="Dew I."/>
            <person name="Miller J.R."/>
            <person name="Flanigan M.J."/>
            <person name="Edwards N.J."/>
            <person name="Bolanos R."/>
            <person name="Fasulo D."/>
            <person name="Halldorsson B.V."/>
            <person name="Hannenhalli S."/>
            <person name="Turner R."/>
            <person name="Yooseph S."/>
            <person name="Lu F."/>
            <person name="Nusskern D.R."/>
            <person name="Shue B.C."/>
            <person name="Zheng X.H."/>
            <person name="Zhong F."/>
            <person name="Delcher A.L."/>
            <person name="Huson D.H."/>
            <person name="Kravitz S.A."/>
            <person name="Mouchard L."/>
            <person name="Reinert K."/>
            <person name="Remington K.A."/>
            <person name="Clark A.G."/>
            <person name="Waterman M.S."/>
            <person name="Eichler E.E."/>
            <person name="Adams M.D."/>
            <person name="Hunkapiller M.W."/>
            <person name="Myers E.W."/>
            <person name="Venter J.C."/>
        </authorList>
    </citation>
    <scope>NUCLEOTIDE SEQUENCE [LARGE SCALE GENOMIC DNA]</scope>
</reference>
<reference key="5">
    <citation type="journal article" date="2004" name="Genome Res.">
        <title>The status, quality, and expansion of the NIH full-length cDNA project: the Mammalian Gene Collection (MGC).</title>
        <authorList>
            <consortium name="The MGC Project Team"/>
        </authorList>
    </citation>
    <scope>NUCLEOTIDE SEQUENCE [LARGE SCALE MRNA] (ISOFORM 1)</scope>
    <source>
        <tissue>Skin</tissue>
    </source>
</reference>
<reference key="6">
    <citation type="journal article" date="2011" name="BMC Syst. Biol.">
        <title>Initial characterization of the human central proteome.</title>
        <authorList>
            <person name="Burkard T.R."/>
            <person name="Planyavsky M."/>
            <person name="Kaupe I."/>
            <person name="Breitwieser F.P."/>
            <person name="Buerckstuemmer T."/>
            <person name="Bennett K.L."/>
            <person name="Superti-Furga G."/>
            <person name="Colinge J."/>
        </authorList>
    </citation>
    <scope>IDENTIFICATION BY MASS SPECTROMETRY [LARGE SCALE ANALYSIS]</scope>
</reference>
<reference key="7">
    <citation type="journal article" date="2014" name="Neurology">
        <title>Homozygous splice mutation in CWF19L1 in a Turkish family with recessive ataxia syndrome.</title>
        <authorList>
            <person name="Burns R."/>
            <person name="Majczenko K."/>
            <person name="Xu J."/>
            <person name="Peng W."/>
            <person name="Yapici Z."/>
            <person name="Dowling J.J."/>
            <person name="Li J.Z."/>
            <person name="Burmeister M."/>
        </authorList>
    </citation>
    <scope>INVOLVEMENT IN SCAR17</scope>
    <scope>TISSUE SPECIFICITY</scope>
</reference>
<feature type="chain" id="PRO_0000315641" description="CWF19-like protein 1">
    <location>
        <begin position="1"/>
        <end position="538"/>
    </location>
</feature>
<feature type="region of interest" description="Disordered" evidence="1">
    <location>
        <begin position="298"/>
        <end position="324"/>
    </location>
</feature>
<feature type="splice variant" id="VSP_030586" description="In isoform 2." evidence="3">
    <location>
        <begin position="1"/>
        <end position="296"/>
    </location>
</feature>
<feature type="splice variant" id="VSP_030587" description="In isoform 3." evidence="3 4">
    <location>
        <begin position="1"/>
        <end position="137"/>
    </location>
</feature>
<feature type="splice variant" id="VSP_030588" description="In isoform 2." evidence="3">
    <original>KQGRKRSSTGRDSKSSPHPKQPRKPPQ</original>
    <variation>MKSREGSVHPQVEIANLLLIQSSLANL</variation>
    <location>
        <begin position="297"/>
        <end position="323"/>
    </location>
</feature>
<feature type="sequence variant" id="VAR_038264" description="In dbSNP:rs2270962.">
    <original>C</original>
    <variation>Y</variation>
    <location>
        <position position="160"/>
    </location>
</feature>
<feature type="sequence variant" id="VAR_038265" description="In dbSNP:rs7073610.">
    <original>P</original>
    <variation>L</variation>
    <location>
        <position position="259"/>
    </location>
</feature>
<feature type="sequence variant" id="VAR_038266" description="In dbSNP:rs35490714.">
    <original>R</original>
    <variation>H</variation>
    <location>
        <position position="523"/>
    </location>
</feature>
<feature type="sequence variant" id="VAR_038267" description="In dbSNP:rs7922946.">
    <original>R</original>
    <variation>Q</variation>
    <location>
        <position position="526"/>
    </location>
</feature>
<feature type="sequence conflict" description="In Ref. 5; AAH08746." evidence="6" ref="5">
    <original>A</original>
    <variation>V</variation>
    <location>
        <position position="63"/>
    </location>
</feature>
<evidence type="ECO:0000256" key="1">
    <source>
        <dbReference type="SAM" id="MobiDB-lite"/>
    </source>
</evidence>
<evidence type="ECO:0000269" key="2">
    <source>
    </source>
</evidence>
<evidence type="ECO:0000303" key="3">
    <source>
    </source>
</evidence>
<evidence type="ECO:0000303" key="4">
    <source>
    </source>
</evidence>
<evidence type="ECO:0000303" key="5">
    <source>
    </source>
</evidence>
<evidence type="ECO:0000305" key="6"/>
<keyword id="KW-0002">3D-structure</keyword>
<keyword id="KW-0025">Alternative splicing</keyword>
<keyword id="KW-0523">Neurodegeneration</keyword>
<keyword id="KW-1267">Proteomics identification</keyword>
<keyword id="KW-1185">Reference proteome</keyword>
<proteinExistence type="evidence at protein level"/>
<comment type="interaction">
    <interactant intactId="EBI-719164">
        <id>Q69YN2</id>
    </interactant>
    <interactant intactId="EBI-5453285">
        <id>Q2TBE0</id>
        <label>CWF19L2</label>
    </interactant>
    <organismsDiffer>false</organismsDiffer>
    <experiments>3</experiments>
</comment>
<comment type="alternative products">
    <event type="alternative splicing"/>
    <isoform>
        <id>Q69YN2-1</id>
        <name>1</name>
        <sequence type="displayed"/>
    </isoform>
    <isoform>
        <id>Q69YN2-2</id>
        <name>2</name>
        <sequence type="described" ref="VSP_030586 VSP_030588"/>
    </isoform>
    <isoform>
        <id>Q69YN2-3</id>
        <name>3</name>
        <sequence type="described" ref="VSP_030587"/>
    </isoform>
</comment>
<comment type="tissue specificity">
    <text evidence="2">Expressed in many brain regions, including cerebellum, thalamus and occipital, parietal and temporal lobes (at protein level). Also expressed in the spinal cord (at protein level).</text>
</comment>
<comment type="disease" evidence="2">
    <disease id="DI-04290">
        <name>Spinocerebellar ataxia, autosomal recessive, 17</name>
        <acronym>SCAR17</acronym>
        <description>A form of spinocerebellar ataxia, a clinically and genetically heterogeneous group of cerebellar disorders. Patients show progressive incoordination of gait and often poor coordination of hands, speech and eye movements, due to degeneration of the cerebellum with variable involvement of the brainstem and spinal cord. SCAR17 features include non-progressive congenital cerebellar ataxia, mildly delayed walking with an unsteady gait and frequent falls, dysarthria, dysmetria, hypotonia in the extremities, truncal ataxia, increased reflexes in the lower extremities, and intellectual disability.</description>
        <dbReference type="MIM" id="616127"/>
    </disease>
    <text evidence="2">The disease is caused by variants affecting the gene represented in this entry. A disease-causing mutation has been reported that affects an intronic splice donor site and causes exon 9 skipping, this leads to an out-of-frame stop codon after 60 aberrant amino acids. Patients carrying this mutation exhibit much lower mRNA and protein levels compared to unaffected controls, probably due to mRNA nonsense-mediated decay (PubMed:25361784).</text>
</comment>
<comment type="similarity">
    <text evidence="6">Belongs to the CWF19 family.</text>
</comment>
<gene>
    <name type="primary">CWF19L1</name>
</gene>
<protein>
    <recommendedName>
        <fullName>CWF19-like protein 1</fullName>
        <shortName evidence="5">C19L1</shortName>
    </recommendedName>
</protein>
<organism>
    <name type="scientific">Homo sapiens</name>
    <name type="common">Human</name>
    <dbReference type="NCBI Taxonomy" id="9606"/>
    <lineage>
        <taxon>Eukaryota</taxon>
        <taxon>Metazoa</taxon>
        <taxon>Chordata</taxon>
        <taxon>Craniata</taxon>
        <taxon>Vertebrata</taxon>
        <taxon>Euteleostomi</taxon>
        <taxon>Mammalia</taxon>
        <taxon>Eutheria</taxon>
        <taxon>Euarchontoglires</taxon>
        <taxon>Primates</taxon>
        <taxon>Haplorrhini</taxon>
        <taxon>Catarrhini</taxon>
        <taxon>Hominidae</taxon>
        <taxon>Homo</taxon>
    </lineage>
</organism>
<dbReference type="EMBL" id="AK001860">
    <property type="protein sequence ID" value="BAA91947.1"/>
    <property type="molecule type" value="mRNA"/>
</dbReference>
<dbReference type="EMBL" id="AK023984">
    <property type="protein sequence ID" value="BAB14754.1"/>
    <property type="molecule type" value="mRNA"/>
</dbReference>
<dbReference type="EMBL" id="AL832515">
    <property type="protein sequence ID" value="CAH10625.1"/>
    <property type="molecule type" value="mRNA"/>
</dbReference>
<dbReference type="EMBL" id="AK295303">
    <property type="protein sequence ID" value="BAG58283.1"/>
    <property type="molecule type" value="mRNA"/>
</dbReference>
<dbReference type="EMBL" id="AL138921">
    <property type="status" value="NOT_ANNOTATED_CDS"/>
    <property type="molecule type" value="Genomic_DNA"/>
</dbReference>
<dbReference type="EMBL" id="CH471066">
    <property type="protein sequence ID" value="EAW49838.1"/>
    <property type="molecule type" value="Genomic_DNA"/>
</dbReference>
<dbReference type="EMBL" id="CH471066">
    <property type="protein sequence ID" value="EAW49839.1"/>
    <property type="molecule type" value="Genomic_DNA"/>
</dbReference>
<dbReference type="EMBL" id="CH471066">
    <property type="protein sequence ID" value="EAW49843.1"/>
    <property type="molecule type" value="Genomic_DNA"/>
</dbReference>
<dbReference type="EMBL" id="CH471066">
    <property type="protein sequence ID" value="EAW49844.1"/>
    <property type="molecule type" value="Genomic_DNA"/>
</dbReference>
<dbReference type="EMBL" id="BC008746">
    <property type="protein sequence ID" value="AAH08746.1"/>
    <property type="molecule type" value="mRNA"/>
</dbReference>
<dbReference type="CCDS" id="CCDS7489.1">
    <molecule id="Q69YN2-1"/>
</dbReference>
<dbReference type="RefSeq" id="NP_001290333.1">
    <property type="nucleotide sequence ID" value="NM_001303404.1"/>
</dbReference>
<dbReference type="RefSeq" id="NP_001290334.1">
    <molecule id="Q69YN2-3"/>
    <property type="nucleotide sequence ID" value="NM_001303405.2"/>
</dbReference>
<dbReference type="RefSeq" id="NP_001290335.1">
    <molecule id="Q69YN2-3"/>
    <property type="nucleotide sequence ID" value="NM_001303406.2"/>
</dbReference>
<dbReference type="RefSeq" id="NP_060764.3">
    <molecule id="Q69YN2-1"/>
    <property type="nucleotide sequence ID" value="NM_018294.5"/>
</dbReference>
<dbReference type="PDB" id="8RO2">
    <property type="method" value="EM"/>
    <property type="resolution" value="3.50 A"/>
    <property type="chains" value="L1=1-538"/>
</dbReference>
<dbReference type="PDBsum" id="8RO2"/>
<dbReference type="EMDB" id="EMD-19399"/>
<dbReference type="SMR" id="Q69YN2"/>
<dbReference type="BioGRID" id="120568">
    <property type="interactions" value="110"/>
</dbReference>
<dbReference type="FunCoup" id="Q69YN2">
    <property type="interactions" value="1726"/>
</dbReference>
<dbReference type="IntAct" id="Q69YN2">
    <property type="interactions" value="50"/>
</dbReference>
<dbReference type="MINT" id="Q69YN2"/>
<dbReference type="STRING" id="9606.ENSP00000326411"/>
<dbReference type="GlyGen" id="Q69YN2">
    <property type="glycosylation" value="1 site, 1 O-linked glycan (1 site)"/>
</dbReference>
<dbReference type="iPTMnet" id="Q69YN2"/>
<dbReference type="PhosphoSitePlus" id="Q69YN2"/>
<dbReference type="BioMuta" id="CWF19L1"/>
<dbReference type="DMDM" id="166225917"/>
<dbReference type="jPOST" id="Q69YN2"/>
<dbReference type="MassIVE" id="Q69YN2"/>
<dbReference type="PaxDb" id="9606-ENSP00000326411"/>
<dbReference type="PeptideAtlas" id="Q69YN2"/>
<dbReference type="ProteomicsDB" id="66161">
    <molecule id="Q69YN2-1"/>
</dbReference>
<dbReference type="ProteomicsDB" id="66162">
    <molecule id="Q69YN2-2"/>
</dbReference>
<dbReference type="ProteomicsDB" id="66163">
    <molecule id="Q69YN2-3"/>
</dbReference>
<dbReference type="Pumba" id="Q69YN2"/>
<dbReference type="Antibodypedia" id="49159">
    <property type="antibodies" value="101 antibodies from 16 providers"/>
</dbReference>
<dbReference type="DNASU" id="55280"/>
<dbReference type="Ensembl" id="ENST00000354105.10">
    <molecule id="Q69YN2-1"/>
    <property type="protein sequence ID" value="ENSP00000326411.6"/>
    <property type="gene ID" value="ENSG00000095485.18"/>
</dbReference>
<dbReference type="GeneID" id="55280"/>
<dbReference type="KEGG" id="hsa:55280"/>
<dbReference type="MANE-Select" id="ENST00000354105.10">
    <property type="protein sequence ID" value="ENSP00000326411.6"/>
    <property type="RefSeq nucleotide sequence ID" value="NM_018294.6"/>
    <property type="RefSeq protein sequence ID" value="NP_060764.3"/>
</dbReference>
<dbReference type="UCSC" id="uc001kqq.1">
    <molecule id="Q69YN2-1"/>
    <property type="organism name" value="human"/>
</dbReference>
<dbReference type="AGR" id="HGNC:25613"/>
<dbReference type="CTD" id="55280"/>
<dbReference type="DisGeNET" id="55280"/>
<dbReference type="GeneCards" id="CWF19L1"/>
<dbReference type="HGNC" id="HGNC:25613">
    <property type="gene designation" value="CWF19L1"/>
</dbReference>
<dbReference type="HPA" id="ENSG00000095485">
    <property type="expression patterns" value="Low tissue specificity"/>
</dbReference>
<dbReference type="MalaCards" id="CWF19L1"/>
<dbReference type="MIM" id="616120">
    <property type="type" value="gene"/>
</dbReference>
<dbReference type="MIM" id="616127">
    <property type="type" value="phenotype"/>
</dbReference>
<dbReference type="neXtProt" id="NX_Q69YN2"/>
<dbReference type="OpenTargets" id="ENSG00000095485"/>
<dbReference type="Orphanet" id="453521">
    <property type="disease" value="Autosomal recessive cerebellar ataxia due to CWF19L1 deficiency"/>
</dbReference>
<dbReference type="PharmGKB" id="PA134864340"/>
<dbReference type="VEuPathDB" id="HostDB:ENSG00000095485"/>
<dbReference type="eggNOG" id="KOG2476">
    <property type="taxonomic scope" value="Eukaryota"/>
</dbReference>
<dbReference type="GeneTree" id="ENSGT00940000156000"/>
<dbReference type="HOGENOM" id="CLU_019955_2_0_1"/>
<dbReference type="InParanoid" id="Q69YN2"/>
<dbReference type="OMA" id="IVPITHY"/>
<dbReference type="OrthoDB" id="444325at2759"/>
<dbReference type="PAN-GO" id="Q69YN2">
    <property type="GO annotations" value="3 GO annotations based on evolutionary models"/>
</dbReference>
<dbReference type="PhylomeDB" id="Q69YN2"/>
<dbReference type="TreeFam" id="TF105790"/>
<dbReference type="PathwayCommons" id="Q69YN2"/>
<dbReference type="SignaLink" id="Q69YN2"/>
<dbReference type="BioGRID-ORCS" id="55280">
    <property type="hits" value="55 hits in 1118 CRISPR screens"/>
</dbReference>
<dbReference type="ChiTaRS" id="CWF19L1">
    <property type="organism name" value="human"/>
</dbReference>
<dbReference type="GenomeRNAi" id="55280"/>
<dbReference type="Pharos" id="Q69YN2">
    <property type="development level" value="Tbio"/>
</dbReference>
<dbReference type="PRO" id="PR:Q69YN2"/>
<dbReference type="Proteomes" id="UP000005640">
    <property type="component" value="Chromosome 10"/>
</dbReference>
<dbReference type="RNAct" id="Q69YN2">
    <property type="molecule type" value="protein"/>
</dbReference>
<dbReference type="Bgee" id="ENSG00000095485">
    <property type="expression patterns" value="Expressed in monocyte and 145 other cell types or tissues"/>
</dbReference>
<dbReference type="ExpressionAtlas" id="Q69YN2">
    <property type="expression patterns" value="baseline and differential"/>
</dbReference>
<dbReference type="GO" id="GO:0071014">
    <property type="term" value="C:post-mRNA release spliceosomal complex"/>
    <property type="evidence" value="ECO:0000318"/>
    <property type="project" value="GO_Central"/>
</dbReference>
<dbReference type="GO" id="GO:0061632">
    <property type="term" value="F:RNA lariat debranching enzyme activator activity"/>
    <property type="evidence" value="ECO:0000318"/>
    <property type="project" value="GO_Central"/>
</dbReference>
<dbReference type="GO" id="GO:0000398">
    <property type="term" value="P:mRNA splicing, via spliceosome"/>
    <property type="evidence" value="ECO:0000318"/>
    <property type="project" value="GO_Central"/>
</dbReference>
<dbReference type="CDD" id="cd07380">
    <property type="entry name" value="MPP_CWF19_N"/>
    <property type="match status" value="1"/>
</dbReference>
<dbReference type="FunFam" id="3.30.428.10:FF:000024">
    <property type="entry name" value="CWF19-like cell cycle control factor 1"/>
    <property type="match status" value="1"/>
</dbReference>
<dbReference type="Gene3D" id="3.30.428.10">
    <property type="entry name" value="HIT-like"/>
    <property type="match status" value="1"/>
</dbReference>
<dbReference type="InterPro" id="IPR040194">
    <property type="entry name" value="Cwf19-like"/>
</dbReference>
<dbReference type="InterPro" id="IPR006768">
    <property type="entry name" value="Cwf19-like_C_dom-1"/>
</dbReference>
<dbReference type="InterPro" id="IPR006767">
    <property type="entry name" value="Cwf19-like_C_dom-2"/>
</dbReference>
<dbReference type="InterPro" id="IPR036265">
    <property type="entry name" value="HIT-like_sf"/>
</dbReference>
<dbReference type="PANTHER" id="PTHR12072">
    <property type="entry name" value="CWF19, CELL CYCLE CONTROL PROTEIN"/>
    <property type="match status" value="1"/>
</dbReference>
<dbReference type="PANTHER" id="PTHR12072:SF4">
    <property type="entry name" value="CWF19-LIKE PROTEIN 1"/>
    <property type="match status" value="1"/>
</dbReference>
<dbReference type="Pfam" id="PF04677">
    <property type="entry name" value="CwfJ_C_1"/>
    <property type="match status" value="1"/>
</dbReference>
<dbReference type="Pfam" id="PF04676">
    <property type="entry name" value="CwfJ_C_2"/>
    <property type="match status" value="1"/>
</dbReference>
<dbReference type="SUPFAM" id="SSF54197">
    <property type="entry name" value="HIT-like"/>
    <property type="match status" value="1"/>
</dbReference>
<name>C19L1_HUMAN</name>
<sequence length="538" mass="60619">MAQKPLRLLACGDVEGKFDILFNRVQAIQKKSGNFDLLLCVGNFFGSTQDAEWEEYKTGIKKAPIQTYVLGANNQETVKYFQDADGCELAENITYLGRKGIFTGSSGLQIVYLSGTESLNEPVPGYSFSPKDVSSLRMMLCTTSQFKGVDILLTSPWPKCVGNFGNSSGEVDTKKCGSALVSSLATGLKPRYHFAALEKTYYERLPYRNHIILQENAQHATRFIALANVGNPEKKKYLYAFSIVPMKLMDAAELVKQPPDVTENPYRKSGQEASIGKQILAPVEESACQFFFDLNEKQGRKRSSTGRDSKSSPHPKQPRKPPQPPGPCWFCLASPEVEKHLVVNIGTHCYLALAKGGLSDDHVLILPIGHYQSVVELSAEVVEEVEKYKATLRRFFKSRGKWCVVFERNYKSHHLQLQVIPVPISCSTTDDIKDAFITQAQEQQIELLEIPEHSDIKQIAQPGAAYFYVELDTGEKLFHRIKKNFPLQFGREVLASEAILNVPDKSDWRQCQISKEDEETLARRFRKDFEPYDFTLDD</sequence>
<accession>Q69YN2</accession>
<accession>B4DHX1</accession>
<accession>D3DR66</accession>
<accession>Q5W0I3</accession>
<accession>Q96HC3</accession>
<accession>Q9H865</accession>
<accession>Q9NV13</accession>